<name>NUOC_POLNA</name>
<keyword id="KW-0997">Cell inner membrane</keyword>
<keyword id="KW-1003">Cell membrane</keyword>
<keyword id="KW-0472">Membrane</keyword>
<keyword id="KW-0520">NAD</keyword>
<keyword id="KW-0874">Quinone</keyword>
<keyword id="KW-1185">Reference proteome</keyword>
<keyword id="KW-1278">Translocase</keyword>
<keyword id="KW-0813">Transport</keyword>
<keyword id="KW-0830">Ubiquinone</keyword>
<reference key="1">
    <citation type="journal article" date="2009" name="Environ. Microbiol.">
        <title>The genome of Polaromonas naphthalenivorans strain CJ2, isolated from coal tar-contaminated sediment, reveals physiological and metabolic versatility and evolution through extensive horizontal gene transfer.</title>
        <authorList>
            <person name="Yagi J.M."/>
            <person name="Sims D."/>
            <person name="Brettin T."/>
            <person name="Bruce D."/>
            <person name="Madsen E.L."/>
        </authorList>
    </citation>
    <scope>NUCLEOTIDE SEQUENCE [LARGE SCALE GENOMIC DNA]</scope>
    <source>
        <strain>CJ2</strain>
    </source>
</reference>
<evidence type="ECO:0000255" key="1">
    <source>
        <dbReference type="HAMAP-Rule" id="MF_01357"/>
    </source>
</evidence>
<proteinExistence type="inferred from homology"/>
<comment type="function">
    <text evidence="1">NDH-1 shuttles electrons from NADH, via FMN and iron-sulfur (Fe-S) centers, to quinones in the respiratory chain. The immediate electron acceptor for the enzyme in this species is believed to be ubiquinone. Couples the redox reaction to proton translocation (for every two electrons transferred, four hydrogen ions are translocated across the cytoplasmic membrane), and thus conserves the redox energy in a proton gradient.</text>
</comment>
<comment type="catalytic activity">
    <reaction evidence="1">
        <text>a quinone + NADH + 5 H(+)(in) = a quinol + NAD(+) + 4 H(+)(out)</text>
        <dbReference type="Rhea" id="RHEA:57888"/>
        <dbReference type="ChEBI" id="CHEBI:15378"/>
        <dbReference type="ChEBI" id="CHEBI:24646"/>
        <dbReference type="ChEBI" id="CHEBI:57540"/>
        <dbReference type="ChEBI" id="CHEBI:57945"/>
        <dbReference type="ChEBI" id="CHEBI:132124"/>
    </reaction>
</comment>
<comment type="subunit">
    <text evidence="1">NDH-1 is composed of 14 different subunits. Subunits NuoB, C, D, E, F, and G constitute the peripheral sector of the complex.</text>
</comment>
<comment type="subcellular location">
    <subcellularLocation>
        <location evidence="1">Cell inner membrane</location>
        <topology evidence="1">Peripheral membrane protein</topology>
        <orientation evidence="1">Cytoplasmic side</orientation>
    </subcellularLocation>
</comment>
<comment type="similarity">
    <text evidence="1">Belongs to the complex I 30 kDa subunit family.</text>
</comment>
<accession>A1VM62</accession>
<protein>
    <recommendedName>
        <fullName evidence="1">NADH-quinone oxidoreductase subunit C</fullName>
        <ecNumber evidence="1">7.1.1.-</ecNumber>
    </recommendedName>
    <alternativeName>
        <fullName evidence="1">NADH dehydrogenase I subunit C</fullName>
    </alternativeName>
    <alternativeName>
        <fullName evidence="1">NDH-1 subunit C</fullName>
    </alternativeName>
</protein>
<organism>
    <name type="scientific">Polaromonas naphthalenivorans (strain CJ2)</name>
    <dbReference type="NCBI Taxonomy" id="365044"/>
    <lineage>
        <taxon>Bacteria</taxon>
        <taxon>Pseudomonadati</taxon>
        <taxon>Pseudomonadota</taxon>
        <taxon>Betaproteobacteria</taxon>
        <taxon>Burkholderiales</taxon>
        <taxon>Comamonadaceae</taxon>
        <taxon>Polaromonas</taxon>
    </lineage>
</organism>
<sequence>MEFSHPPVSVSQLGETIALVLGGKAKSVKIALGEITVTVAAADYLAAATLLRDAPGCKFEQLLDLCGLDYSEYKNGQYDGLRYCVSSHLLSVSLNQRVRLKVFCPDDDFPVVDSVNGIWNSANWFEREAFDLYGIVFEGHNDLRRILTDYGFIGHPFRKDFPTTGHVEMRYDAEQKRVIYQPVTIEPREMIPRVIREDNYGGLQ</sequence>
<dbReference type="EC" id="7.1.1.-" evidence="1"/>
<dbReference type="EMBL" id="CP000529">
    <property type="protein sequence ID" value="ABM36740.1"/>
    <property type="molecule type" value="Genomic_DNA"/>
</dbReference>
<dbReference type="RefSeq" id="WP_011800827.1">
    <property type="nucleotide sequence ID" value="NC_008781.1"/>
</dbReference>
<dbReference type="SMR" id="A1VM62"/>
<dbReference type="STRING" id="365044.Pnap_1426"/>
<dbReference type="KEGG" id="pna:Pnap_1426"/>
<dbReference type="eggNOG" id="COG0852">
    <property type="taxonomic scope" value="Bacteria"/>
</dbReference>
<dbReference type="HOGENOM" id="CLU_042628_2_1_4"/>
<dbReference type="OrthoDB" id="9803286at2"/>
<dbReference type="Proteomes" id="UP000000644">
    <property type="component" value="Chromosome"/>
</dbReference>
<dbReference type="GO" id="GO:0005886">
    <property type="term" value="C:plasma membrane"/>
    <property type="evidence" value="ECO:0007669"/>
    <property type="project" value="UniProtKB-SubCell"/>
</dbReference>
<dbReference type="GO" id="GO:0008137">
    <property type="term" value="F:NADH dehydrogenase (ubiquinone) activity"/>
    <property type="evidence" value="ECO:0007669"/>
    <property type="project" value="InterPro"/>
</dbReference>
<dbReference type="GO" id="GO:0050136">
    <property type="term" value="F:NADH:ubiquinone reductase (non-electrogenic) activity"/>
    <property type="evidence" value="ECO:0007669"/>
    <property type="project" value="UniProtKB-UniRule"/>
</dbReference>
<dbReference type="GO" id="GO:0048038">
    <property type="term" value="F:quinone binding"/>
    <property type="evidence" value="ECO:0007669"/>
    <property type="project" value="UniProtKB-KW"/>
</dbReference>
<dbReference type="Gene3D" id="3.30.460.80">
    <property type="entry name" value="NADH:ubiquinone oxidoreductase, 30kDa subunit"/>
    <property type="match status" value="1"/>
</dbReference>
<dbReference type="HAMAP" id="MF_01357">
    <property type="entry name" value="NDH1_NuoC"/>
    <property type="match status" value="1"/>
</dbReference>
<dbReference type="InterPro" id="IPR010218">
    <property type="entry name" value="NADH_DH_suC"/>
</dbReference>
<dbReference type="InterPro" id="IPR037232">
    <property type="entry name" value="NADH_quin_OxRdtase_su_C/D-like"/>
</dbReference>
<dbReference type="InterPro" id="IPR001268">
    <property type="entry name" value="NADH_UbQ_OxRdtase_30kDa_su"/>
</dbReference>
<dbReference type="InterPro" id="IPR020396">
    <property type="entry name" value="NADH_UbQ_OxRdtase_CS"/>
</dbReference>
<dbReference type="NCBIfam" id="TIGR01961">
    <property type="entry name" value="NuoC_fam"/>
    <property type="match status" value="1"/>
</dbReference>
<dbReference type="NCBIfam" id="NF004730">
    <property type="entry name" value="PRK06074.1-1"/>
    <property type="match status" value="1"/>
</dbReference>
<dbReference type="PANTHER" id="PTHR10884:SF14">
    <property type="entry name" value="NADH DEHYDROGENASE [UBIQUINONE] IRON-SULFUR PROTEIN 3, MITOCHONDRIAL"/>
    <property type="match status" value="1"/>
</dbReference>
<dbReference type="PANTHER" id="PTHR10884">
    <property type="entry name" value="NADH DEHYDROGENASE UBIQUINONE IRON-SULFUR PROTEIN 3"/>
    <property type="match status" value="1"/>
</dbReference>
<dbReference type="Pfam" id="PF00329">
    <property type="entry name" value="Complex1_30kDa"/>
    <property type="match status" value="1"/>
</dbReference>
<dbReference type="SUPFAM" id="SSF143243">
    <property type="entry name" value="Nqo5-like"/>
    <property type="match status" value="1"/>
</dbReference>
<dbReference type="PROSITE" id="PS00542">
    <property type="entry name" value="COMPLEX1_30K"/>
    <property type="match status" value="1"/>
</dbReference>
<feature type="chain" id="PRO_0000358160" description="NADH-quinone oxidoreductase subunit C">
    <location>
        <begin position="1"/>
        <end position="204"/>
    </location>
</feature>
<gene>
    <name evidence="1" type="primary">nuoC</name>
    <name type="ordered locus">Pnap_1426</name>
</gene>